<reference key="1">
    <citation type="submission" date="2005-03" db="EMBL/GenBank/DDBJ databases">
        <authorList>
            <consortium name="NIH - Xenopus Gene Collection (XGC) project"/>
        </authorList>
    </citation>
    <scope>NUCLEOTIDE SEQUENCE [LARGE SCALE MRNA]</scope>
</reference>
<protein>
    <recommendedName>
        <fullName>Torsin-4A</fullName>
    </recommendedName>
    <alternativeName>
        <fullName>Torsin family 4 member A</fullName>
    </alternativeName>
</protein>
<sequence length="420" mass="48393">MEDSESSTQAPAAHHGISLASSPVRALIRMRRKIRTLKKSRLQLDLTTGRPLDSAKASLRRQISTDRASLFKTTTYEKQQYFNFDTPTLEKLALNNQIRKKNRKKSRHVLYPGNVRKCLPVEQKSKAKRCLLLFIAIVCFQIFNAIENLDDNLQKYDLDGLEKTLQREVFGQRRAIDKLMDHLKDYLATHYHNKPLVLSFNGPSGVGKSHTGRLLAKHFRSVMDNDFVLQYYTMHNCPDENDVAKCQAEVSGMISEMISRAEIEEKIPVFIFDELEVMPVALLDVLHGYFQLNQSNEYLNAVYILISNIGGNEITKFVLQNSSKDFVNVPQELRHLVLTSLRKQHFLWDVAEIVPFTLLEKRHILDCFLDELLREGLYPDHSNIESLAGQLRYYTKENKEYSITGCKQVVAKVNLLQPYT</sequence>
<keyword id="KW-0067">ATP-binding</keyword>
<keyword id="KW-0472">Membrane</keyword>
<keyword id="KW-0547">Nucleotide-binding</keyword>
<keyword id="KW-1185">Reference proteome</keyword>
<keyword id="KW-0812">Transmembrane</keyword>
<keyword id="KW-1133">Transmembrane helix</keyword>
<comment type="subcellular location">
    <subcellularLocation>
        <location evidence="2">Membrane</location>
        <topology evidence="2">Single-pass membrane protein</topology>
    </subcellularLocation>
</comment>
<comment type="similarity">
    <text evidence="2">Belongs to the ClpA/ClpB family. Torsin subfamily.</text>
</comment>
<feature type="chain" id="PRO_0000287494" description="Torsin-4A">
    <location>
        <begin position="1"/>
        <end position="420"/>
    </location>
</feature>
<feature type="transmembrane region" description="Helical" evidence="1">
    <location>
        <begin position="130"/>
        <end position="150"/>
    </location>
</feature>
<feature type="binding site" evidence="1">
    <location>
        <begin position="202"/>
        <end position="209"/>
    </location>
    <ligand>
        <name>ATP</name>
        <dbReference type="ChEBI" id="CHEBI:30616"/>
    </ligand>
</feature>
<name>TOR4A_XENTR</name>
<accession>Q5BKJ7</accession>
<organism>
    <name type="scientific">Xenopus tropicalis</name>
    <name type="common">Western clawed frog</name>
    <name type="synonym">Silurana tropicalis</name>
    <dbReference type="NCBI Taxonomy" id="8364"/>
    <lineage>
        <taxon>Eukaryota</taxon>
        <taxon>Metazoa</taxon>
        <taxon>Chordata</taxon>
        <taxon>Craniata</taxon>
        <taxon>Vertebrata</taxon>
        <taxon>Euteleostomi</taxon>
        <taxon>Amphibia</taxon>
        <taxon>Batrachia</taxon>
        <taxon>Anura</taxon>
        <taxon>Pipoidea</taxon>
        <taxon>Pipidae</taxon>
        <taxon>Xenopodinae</taxon>
        <taxon>Xenopus</taxon>
        <taxon>Silurana</taxon>
    </lineage>
</organism>
<evidence type="ECO:0000255" key="1"/>
<evidence type="ECO:0000305" key="2"/>
<gene>
    <name type="primary">tor4a</name>
</gene>
<proteinExistence type="evidence at transcript level"/>
<dbReference type="EMBL" id="BC091049">
    <property type="protein sequence ID" value="AAH91049.1"/>
    <property type="molecule type" value="mRNA"/>
</dbReference>
<dbReference type="RefSeq" id="NP_001025600.1">
    <property type="nucleotide sequence ID" value="NM_001030429.1"/>
</dbReference>
<dbReference type="RefSeq" id="XP_012809909.1">
    <property type="nucleotide sequence ID" value="XM_012954455.3"/>
</dbReference>
<dbReference type="RefSeq" id="XP_012809910.1">
    <property type="nucleotide sequence ID" value="XM_012954456.3"/>
</dbReference>
<dbReference type="RefSeq" id="XP_012809911.1">
    <property type="nucleotide sequence ID" value="XM_012954457.3"/>
</dbReference>
<dbReference type="SMR" id="Q5BKJ7"/>
<dbReference type="FunCoup" id="Q5BKJ7">
    <property type="interactions" value="284"/>
</dbReference>
<dbReference type="STRING" id="8364.ENSXETP00000016262"/>
<dbReference type="PaxDb" id="8364-ENSXETP00000050639"/>
<dbReference type="DNASU" id="594988"/>
<dbReference type="GeneID" id="594988"/>
<dbReference type="KEGG" id="xtr:594988"/>
<dbReference type="AGR" id="Xenbase:XB-GENE-975360"/>
<dbReference type="CTD" id="54863"/>
<dbReference type="Xenbase" id="XB-GENE-975360">
    <property type="gene designation" value="tor4a"/>
</dbReference>
<dbReference type="eggNOG" id="KOG2170">
    <property type="taxonomic scope" value="Eukaryota"/>
</dbReference>
<dbReference type="HOGENOM" id="CLU_053537_1_0_1"/>
<dbReference type="InParanoid" id="Q5BKJ7"/>
<dbReference type="OMA" id="EFAITGC"/>
<dbReference type="OrthoDB" id="9443236at2759"/>
<dbReference type="TreeFam" id="TF314941"/>
<dbReference type="Reactome" id="R-XTR-114608">
    <property type="pathway name" value="Platelet degranulation"/>
</dbReference>
<dbReference type="Proteomes" id="UP000008143">
    <property type="component" value="Chromosome 8"/>
</dbReference>
<dbReference type="Bgee" id="ENSXETG00000023451">
    <property type="expression patterns" value="Expressed in neurula embryo and 11 other cell types or tissues"/>
</dbReference>
<dbReference type="ExpressionAtlas" id="Q5BKJ7">
    <property type="expression patterns" value="differential"/>
</dbReference>
<dbReference type="GO" id="GO:0005737">
    <property type="term" value="C:cytoplasm"/>
    <property type="evidence" value="ECO:0007669"/>
    <property type="project" value="UniProtKB-ARBA"/>
</dbReference>
<dbReference type="GO" id="GO:0012505">
    <property type="term" value="C:endomembrane system"/>
    <property type="evidence" value="ECO:0007669"/>
    <property type="project" value="UniProtKB-ARBA"/>
</dbReference>
<dbReference type="GO" id="GO:0043231">
    <property type="term" value="C:intracellular membrane-bounded organelle"/>
    <property type="evidence" value="ECO:0007669"/>
    <property type="project" value="UniProtKB-ARBA"/>
</dbReference>
<dbReference type="GO" id="GO:0016020">
    <property type="term" value="C:membrane"/>
    <property type="evidence" value="ECO:0007669"/>
    <property type="project" value="UniProtKB-SubCell"/>
</dbReference>
<dbReference type="GO" id="GO:0005524">
    <property type="term" value="F:ATP binding"/>
    <property type="evidence" value="ECO:0007669"/>
    <property type="project" value="UniProtKB-KW"/>
</dbReference>
<dbReference type="GO" id="GO:0016887">
    <property type="term" value="F:ATP hydrolysis activity"/>
    <property type="evidence" value="ECO:0007669"/>
    <property type="project" value="InterPro"/>
</dbReference>
<dbReference type="FunFam" id="3.40.50.300:FF:001429">
    <property type="entry name" value="Torsin family protein C9orf167-like"/>
    <property type="match status" value="1"/>
</dbReference>
<dbReference type="Gene3D" id="3.40.50.300">
    <property type="entry name" value="P-loop containing nucleotide triphosphate hydrolases"/>
    <property type="match status" value="1"/>
</dbReference>
<dbReference type="InterPro" id="IPR001270">
    <property type="entry name" value="ClpA/B"/>
</dbReference>
<dbReference type="InterPro" id="IPR027417">
    <property type="entry name" value="P-loop_NTPase"/>
</dbReference>
<dbReference type="InterPro" id="IPR049337">
    <property type="entry name" value="TOR1A_C"/>
</dbReference>
<dbReference type="InterPro" id="IPR010448">
    <property type="entry name" value="Torsin"/>
</dbReference>
<dbReference type="PANTHER" id="PTHR10760">
    <property type="entry name" value="TORSIN"/>
    <property type="match status" value="1"/>
</dbReference>
<dbReference type="PANTHER" id="PTHR10760:SF1">
    <property type="entry name" value="TORSIN-4A"/>
    <property type="match status" value="1"/>
</dbReference>
<dbReference type="Pfam" id="PF21376">
    <property type="entry name" value="TOR1A_C"/>
    <property type="match status" value="1"/>
</dbReference>
<dbReference type="Pfam" id="PF06309">
    <property type="entry name" value="Torsin"/>
    <property type="match status" value="1"/>
</dbReference>
<dbReference type="PRINTS" id="PR00300">
    <property type="entry name" value="CLPPROTEASEA"/>
</dbReference>
<dbReference type="SUPFAM" id="SSF52540">
    <property type="entry name" value="P-loop containing nucleoside triphosphate hydrolases"/>
    <property type="match status" value="1"/>
</dbReference>